<feature type="signal peptide" evidence="1">
    <location>
        <begin position="1"/>
        <end position="20"/>
    </location>
</feature>
<feature type="chain" id="PRO_0000003486" description="Vitamin B12 transporter BtuB">
    <location>
        <begin position="21"/>
        <end position="614"/>
    </location>
</feature>
<feature type="transmembrane region" description="Beta stranded" evidence="1">
    <location>
        <begin position="158"/>
        <end position="165"/>
    </location>
</feature>
<feature type="transmembrane region" description="Beta stranded" evidence="1">
    <location>
        <begin position="169"/>
        <end position="178"/>
    </location>
</feature>
<feature type="transmembrane region" description="Beta stranded" evidence="1">
    <location>
        <begin position="184"/>
        <end position="195"/>
    </location>
</feature>
<feature type="transmembrane region" description="Beta stranded" evidence="1">
    <location>
        <begin position="217"/>
        <end position="227"/>
    </location>
</feature>
<feature type="transmembrane region" description="Beta stranded" evidence="1">
    <location>
        <begin position="232"/>
        <end position="248"/>
    </location>
</feature>
<feature type="transmembrane region" description="Beta stranded" evidence="1">
    <location>
        <begin position="263"/>
        <end position="277"/>
    </location>
</feature>
<feature type="transmembrane region" description="Beta stranded" evidence="1">
    <location>
        <begin position="279"/>
        <end position="296"/>
    </location>
</feature>
<feature type="transmembrane region" description="Beta stranded" evidence="1">
    <location>
        <begin position="309"/>
        <end position="325"/>
    </location>
</feature>
<feature type="transmembrane region" description="Beta stranded" evidence="1">
    <location>
        <begin position="328"/>
        <end position="337"/>
    </location>
</feature>
<feature type="transmembrane region" description="Beta stranded" evidence="1">
    <location>
        <begin position="353"/>
        <end position="369"/>
    </location>
</feature>
<feature type="transmembrane region" description="Beta stranded" evidence="1">
    <location>
        <begin position="371"/>
        <end position="381"/>
    </location>
</feature>
<feature type="transmembrane region" description="Beta stranded" evidence="1">
    <location>
        <begin position="385"/>
        <end position="400"/>
    </location>
</feature>
<feature type="transmembrane region" description="Beta stranded" evidence="1">
    <location>
        <begin position="403"/>
        <end position="417"/>
    </location>
</feature>
<feature type="transmembrane region" description="Beta stranded" evidence="1">
    <location>
        <begin position="434"/>
        <end position="443"/>
    </location>
</feature>
<feature type="transmembrane region" description="Beta stranded" evidence="1">
    <location>
        <begin position="449"/>
        <end position="458"/>
    </location>
</feature>
<feature type="transmembrane region" description="Beta stranded" evidence="1">
    <location>
        <begin position="473"/>
        <end position="490"/>
    </location>
</feature>
<feature type="transmembrane region" description="Beta stranded" evidence="1">
    <location>
        <begin position="494"/>
        <end position="509"/>
    </location>
</feature>
<feature type="transmembrane region" description="Beta stranded" evidence="1">
    <location>
        <begin position="517"/>
        <end position="529"/>
    </location>
</feature>
<feature type="transmembrane region" description="Beta stranded" evidence="1">
    <location>
        <begin position="535"/>
        <end position="550"/>
    </location>
</feature>
<feature type="transmembrane region" description="Beta stranded" evidence="1">
    <location>
        <begin position="558"/>
        <end position="572"/>
    </location>
</feature>
<feature type="transmembrane region" description="Beta stranded" evidence="1">
    <location>
        <begin position="585"/>
        <end position="596"/>
    </location>
</feature>
<feature type="transmembrane region" description="Beta stranded" evidence="1">
    <location>
        <begin position="602"/>
        <end position="614"/>
    </location>
</feature>
<feature type="domain" description="TBDR plug" evidence="2">
    <location>
        <begin position="38"/>
        <end position="152"/>
    </location>
</feature>
<feature type="domain" description="TBDR beta-barrel" evidence="2">
    <location>
        <begin position="155"/>
        <end position="614"/>
    </location>
</feature>
<feature type="short sequence motif" description="TonB box">
    <location>
        <begin position="26"/>
        <end position="33"/>
    </location>
</feature>
<feature type="short sequence motif" description="TonB C-terminal box">
    <location>
        <begin position="597"/>
        <end position="614"/>
    </location>
</feature>
<feature type="binding site" evidence="1">
    <location>
        <position position="85"/>
    </location>
    <ligand>
        <name>cyanocob(III)alamin</name>
        <dbReference type="ChEBI" id="CHEBI:17439"/>
    </ligand>
</feature>
<feature type="binding site" evidence="1">
    <location>
        <position position="92"/>
    </location>
    <ligand>
        <name>cyanocob(III)alamin</name>
        <dbReference type="ChEBI" id="CHEBI:17439"/>
    </ligand>
</feature>
<feature type="binding site" evidence="1">
    <location>
        <begin position="110"/>
        <end position="111"/>
    </location>
    <ligand>
        <name>cyanocob(III)alamin</name>
        <dbReference type="ChEBI" id="CHEBI:17439"/>
    </ligand>
</feature>
<feature type="binding site" evidence="1">
    <location>
        <position position="199"/>
    </location>
    <ligand>
        <name>Ca(2+)</name>
        <dbReference type="ChEBI" id="CHEBI:29108"/>
        <label>1</label>
    </ligand>
</feature>
<feature type="binding site" evidence="1">
    <location>
        <position position="211"/>
    </location>
    <ligand>
        <name>Ca(2+)</name>
        <dbReference type="ChEBI" id="CHEBI:29108"/>
        <label>1</label>
    </ligand>
</feature>
<feature type="binding site" evidence="1">
    <location>
        <position position="213"/>
    </location>
    <ligand>
        <name>Ca(2+)</name>
        <dbReference type="ChEBI" id="CHEBI:29108"/>
        <label>1</label>
    </ligand>
</feature>
<feature type="binding site" evidence="1">
    <location>
        <position position="213"/>
    </location>
    <ligand>
        <name>Ca(2+)</name>
        <dbReference type="ChEBI" id="CHEBI:29108"/>
        <label>2</label>
    </ligand>
</feature>
<feature type="binding site" evidence="1">
    <location>
        <position position="215"/>
    </location>
    <ligand>
        <name>Ca(2+)</name>
        <dbReference type="ChEBI" id="CHEBI:29108"/>
        <label>1</label>
    </ligand>
</feature>
<feature type="binding site" evidence="1">
    <location>
        <position position="215"/>
    </location>
    <ligand>
        <name>Ca(2+)</name>
        <dbReference type="ChEBI" id="CHEBI:29108"/>
        <label>2</label>
    </ligand>
</feature>
<feature type="binding site" evidence="1">
    <location>
        <position position="249"/>
    </location>
    <ligand>
        <name>Ca(2+)</name>
        <dbReference type="ChEBI" id="CHEBI:29108"/>
        <label>2</label>
    </ligand>
</feature>
<feature type="binding site" evidence="1">
    <location>
        <position position="250"/>
    </location>
    <ligand>
        <name>Ca(2+)</name>
        <dbReference type="ChEBI" id="CHEBI:29108"/>
        <label>1</label>
    </ligand>
</feature>
<feature type="binding site" evidence="1">
    <location>
        <position position="250"/>
    </location>
    <ligand>
        <name>Ca(2+)</name>
        <dbReference type="ChEBI" id="CHEBI:29108"/>
        <label>2</label>
    </ligand>
</feature>
<feature type="binding site" evidence="1">
    <location>
        <position position="251"/>
    </location>
    <ligand>
        <name>cyanocob(III)alamin</name>
        <dbReference type="ChEBI" id="CHEBI:17439"/>
    </ligand>
</feature>
<feature type="binding site" evidence="1">
    <location>
        <position position="261"/>
    </location>
    <ligand>
        <name>Ca(2+)</name>
        <dbReference type="ChEBI" id="CHEBI:29108"/>
        <label>2</label>
    </ligand>
</feature>
<feature type="binding site" evidence="1">
    <location>
        <position position="309"/>
    </location>
    <ligand>
        <name>cyanocob(III)alamin</name>
        <dbReference type="ChEBI" id="CHEBI:17439"/>
    </ligand>
</feature>
<feature type="binding site" evidence="1">
    <location>
        <position position="517"/>
    </location>
    <ligand>
        <name>cyanocob(III)alamin</name>
        <dbReference type="ChEBI" id="CHEBI:17439"/>
    </ligand>
</feature>
<feature type="binding site" evidence="1">
    <location>
        <position position="551"/>
    </location>
    <ligand>
        <name>cyanocob(III)alamin</name>
        <dbReference type="ChEBI" id="CHEBI:17439"/>
    </ligand>
</feature>
<keyword id="KW-0106">Calcium</keyword>
<keyword id="KW-0998">Cell outer membrane</keyword>
<keyword id="KW-0406">Ion transport</keyword>
<keyword id="KW-0472">Membrane</keyword>
<keyword id="KW-0479">Metal-binding</keyword>
<keyword id="KW-0626">Porin</keyword>
<keyword id="KW-0732">Signal</keyword>
<keyword id="KW-0798">TonB box</keyword>
<keyword id="KW-0812">Transmembrane</keyword>
<keyword id="KW-1134">Transmembrane beta strand</keyword>
<keyword id="KW-0813">Transport</keyword>
<name>BTUB_SALCH</name>
<organism>
    <name type="scientific">Salmonella choleraesuis (strain SC-B67)</name>
    <dbReference type="NCBI Taxonomy" id="321314"/>
    <lineage>
        <taxon>Bacteria</taxon>
        <taxon>Pseudomonadati</taxon>
        <taxon>Pseudomonadota</taxon>
        <taxon>Gammaproteobacteria</taxon>
        <taxon>Enterobacterales</taxon>
        <taxon>Enterobacteriaceae</taxon>
        <taxon>Salmonella</taxon>
    </lineage>
</organism>
<sequence>MIKKATLLTAFSVTAFSAWAQDTSPDTLVVTANRFQQPRSAVLAPVTIVTRQDIERWQSTSVNDVLRRLPGVDIAQSGGAGQNSSIFIRGTNSSHVLVLIDGVRLNLAGVSGSADLSQFPVSLVQRIEYIRGPRSAIYGSDAIGGVVNIITTRDNPGTELTAGWGSNSYQNYDISTQQQLGENTRATLIGDYEYTKGFDVVAKGGTGMQAQPDRDGFLSKTLYGALEHTFSDRWSGFVRGYGYDNRTDYDAYYSPGSPLIDTRKLYSQSWDAGLRFNGERIQSQLVSSYSHSKDYNYDPHYGRYDTSATLDEMKQYNVQWTNSVVVGHGNVGAGVDWQKQTTTPGTGYVPEGYDQRNTGVYLTGLQQLGDFTLEAAARSDDNSQFGRHGTWQTSAGWEFIEGYRFIASYGTSYKAPNLGQLYGYYGNPNLNPEKSKQWEGAFEGLTAGVSWRISGYRNDINDMIDYDDHLQKYYNEGKARIKGIEATANFDTGPLTHTVSYDYVDARNAITDTPLPRRSKQMAKYQLDWDVYDFDWGVTYQYLGSRYDSDYSAYPYRTVKMGGVSLWDLTVAYPVTSHLTVRGKIANLFDKDYETVYGYQTAGREYTLSGSYTF</sequence>
<accession>Q57H87</accession>
<reference key="1">
    <citation type="journal article" date="2005" name="Nucleic Acids Res.">
        <title>The genome sequence of Salmonella enterica serovar Choleraesuis, a highly invasive and resistant zoonotic pathogen.</title>
        <authorList>
            <person name="Chiu C.-H."/>
            <person name="Tang P."/>
            <person name="Chu C."/>
            <person name="Hu S."/>
            <person name="Bao Q."/>
            <person name="Yu J."/>
            <person name="Chou Y.-Y."/>
            <person name="Wang H.-S."/>
            <person name="Lee Y.-S."/>
        </authorList>
    </citation>
    <scope>NUCLEOTIDE SEQUENCE [LARGE SCALE GENOMIC DNA]</scope>
    <source>
        <strain>SC-B67</strain>
    </source>
</reference>
<gene>
    <name evidence="1" type="primary">btuB</name>
    <name type="ordered locus">SCH_4019</name>
</gene>
<protein>
    <recommendedName>
        <fullName evidence="1">Vitamin B12 transporter BtuB</fullName>
    </recommendedName>
    <alternativeName>
        <fullName evidence="1">Cobalamin receptor</fullName>
    </alternativeName>
    <alternativeName>
        <fullName evidence="1">Outer membrane cobalamin translocator</fullName>
    </alternativeName>
</protein>
<proteinExistence type="inferred from homology"/>
<comment type="function">
    <text evidence="1">Involved in the active translocation of vitamin B12 (cyanocobalamin) across the outer membrane to the periplasmic space. It derives its energy for transport by interacting with the trans-periplasmic membrane protein TonB.</text>
</comment>
<comment type="subcellular location">
    <subcellularLocation>
        <location evidence="1">Cell outer membrane</location>
        <topology evidence="1">Multi-pass membrane protein</topology>
    </subcellularLocation>
</comment>
<comment type="similarity">
    <text evidence="1">Belongs to the TonB-dependent receptor family. BtuB (TC 1.B.14.3.1) subfamily.</text>
</comment>
<comment type="sequence caution" evidence="3">
    <conflict type="erroneous initiation">
        <sequence resource="EMBL-CDS" id="AAX67925"/>
    </conflict>
</comment>
<dbReference type="EMBL" id="AE017220">
    <property type="protein sequence ID" value="AAX67925.1"/>
    <property type="status" value="ALT_INIT"/>
    <property type="molecule type" value="Genomic_DNA"/>
</dbReference>
<dbReference type="RefSeq" id="WP_000591403.1">
    <property type="nucleotide sequence ID" value="NC_006905.1"/>
</dbReference>
<dbReference type="SMR" id="Q57H87"/>
<dbReference type="KEGG" id="sec:SCH_4019"/>
<dbReference type="HOGENOM" id="CLU_008287_18_5_6"/>
<dbReference type="Proteomes" id="UP000000538">
    <property type="component" value="Chromosome"/>
</dbReference>
<dbReference type="GO" id="GO:0009279">
    <property type="term" value="C:cell outer membrane"/>
    <property type="evidence" value="ECO:0007669"/>
    <property type="project" value="UniProtKB-SubCell"/>
</dbReference>
<dbReference type="GO" id="GO:0046930">
    <property type="term" value="C:pore complex"/>
    <property type="evidence" value="ECO:0007669"/>
    <property type="project" value="UniProtKB-KW"/>
</dbReference>
<dbReference type="GO" id="GO:0015420">
    <property type="term" value="F:ABC-type vitamin B12 transporter activity"/>
    <property type="evidence" value="ECO:0007669"/>
    <property type="project" value="InterPro"/>
</dbReference>
<dbReference type="GO" id="GO:0046872">
    <property type="term" value="F:metal ion binding"/>
    <property type="evidence" value="ECO:0007669"/>
    <property type="project" value="UniProtKB-KW"/>
</dbReference>
<dbReference type="GO" id="GO:0015288">
    <property type="term" value="F:porin activity"/>
    <property type="evidence" value="ECO:0007669"/>
    <property type="project" value="UniProtKB-KW"/>
</dbReference>
<dbReference type="GO" id="GO:0006811">
    <property type="term" value="P:monoatomic ion transport"/>
    <property type="evidence" value="ECO:0007669"/>
    <property type="project" value="UniProtKB-KW"/>
</dbReference>
<dbReference type="CDD" id="cd01347">
    <property type="entry name" value="ligand_gated_channel"/>
    <property type="match status" value="1"/>
</dbReference>
<dbReference type="FunFam" id="2.170.130.10:FF:000002">
    <property type="entry name" value="Vitamin B12 transporter BtuB"/>
    <property type="match status" value="1"/>
</dbReference>
<dbReference type="FunFam" id="2.40.170.20:FF:000001">
    <property type="entry name" value="Vitamin B12 transporter BtuB"/>
    <property type="match status" value="1"/>
</dbReference>
<dbReference type="Gene3D" id="2.40.170.20">
    <property type="entry name" value="TonB-dependent receptor, beta-barrel domain"/>
    <property type="match status" value="1"/>
</dbReference>
<dbReference type="Gene3D" id="2.170.130.10">
    <property type="entry name" value="TonB-dependent receptor, plug domain"/>
    <property type="match status" value="1"/>
</dbReference>
<dbReference type="HAMAP" id="MF_01531">
    <property type="entry name" value="BtuB"/>
    <property type="match status" value="1"/>
</dbReference>
<dbReference type="InterPro" id="IPR010101">
    <property type="entry name" value="B12_transptr_BtuB"/>
</dbReference>
<dbReference type="InterPro" id="IPR012910">
    <property type="entry name" value="Plug_dom"/>
</dbReference>
<dbReference type="InterPro" id="IPR037066">
    <property type="entry name" value="Plug_dom_sf"/>
</dbReference>
<dbReference type="InterPro" id="IPR039426">
    <property type="entry name" value="TonB-dep_rcpt-like"/>
</dbReference>
<dbReference type="InterPro" id="IPR000531">
    <property type="entry name" value="TonB-dep_rcpt_b-brl"/>
</dbReference>
<dbReference type="InterPro" id="IPR010916">
    <property type="entry name" value="TonB_box_CS"/>
</dbReference>
<dbReference type="InterPro" id="IPR036942">
    <property type="entry name" value="TonB_rcpt_b-brl_sf"/>
</dbReference>
<dbReference type="InterPro" id="IPR010917">
    <property type="entry name" value="TonB_rcpt_CS"/>
</dbReference>
<dbReference type="NCBIfam" id="NF007926">
    <property type="entry name" value="PRK10641.1"/>
    <property type="match status" value="1"/>
</dbReference>
<dbReference type="NCBIfam" id="TIGR01779">
    <property type="entry name" value="TonB-B12"/>
    <property type="match status" value="1"/>
</dbReference>
<dbReference type="PANTHER" id="PTHR30069:SF53">
    <property type="entry name" value="COLICIN I RECEPTOR-RELATED"/>
    <property type="match status" value="1"/>
</dbReference>
<dbReference type="PANTHER" id="PTHR30069">
    <property type="entry name" value="TONB-DEPENDENT OUTER MEMBRANE RECEPTOR"/>
    <property type="match status" value="1"/>
</dbReference>
<dbReference type="Pfam" id="PF07715">
    <property type="entry name" value="Plug"/>
    <property type="match status" value="1"/>
</dbReference>
<dbReference type="Pfam" id="PF00593">
    <property type="entry name" value="TonB_dep_Rec_b-barrel"/>
    <property type="match status" value="1"/>
</dbReference>
<dbReference type="SUPFAM" id="SSF56935">
    <property type="entry name" value="Porins"/>
    <property type="match status" value="1"/>
</dbReference>
<dbReference type="PROSITE" id="PS00430">
    <property type="entry name" value="TONB_DEPENDENT_REC_1"/>
    <property type="match status" value="1"/>
</dbReference>
<dbReference type="PROSITE" id="PS01156">
    <property type="entry name" value="TONB_DEPENDENT_REC_2"/>
    <property type="match status" value="1"/>
</dbReference>
<dbReference type="PROSITE" id="PS52016">
    <property type="entry name" value="TONB_DEPENDENT_REC_3"/>
    <property type="match status" value="1"/>
</dbReference>
<evidence type="ECO:0000255" key="1">
    <source>
        <dbReference type="HAMAP-Rule" id="MF_01531"/>
    </source>
</evidence>
<evidence type="ECO:0000255" key="2">
    <source>
        <dbReference type="PROSITE-ProRule" id="PRU01360"/>
    </source>
</evidence>
<evidence type="ECO:0000305" key="3"/>